<reference key="1">
    <citation type="journal article" date="1986" name="Pancreas">
        <title>Primary structures of canine pancreatic lipase and phospholipase A2 messenger RNAs.</title>
        <authorList>
            <person name="Kerfelec B."/>
            <person name="Laforge K.S."/>
            <person name="Puigserver A."/>
            <person name="Scheele G.A."/>
        </authorList>
    </citation>
    <scope>NUCLEOTIDE SEQUENCE [MRNA]</scope>
</reference>
<reference key="2">
    <citation type="journal article" date="1989" name="J. Biol. Chem.">
        <title>Structure of the canine pancreatic lipase gene.</title>
        <authorList>
            <person name="Mickel F.S."/>
            <person name="Weidenbach F."/>
            <person name="Swarovsky B."/>
            <person name="Laforge K.S."/>
            <person name="Scheele G.A."/>
        </authorList>
    </citation>
    <scope>NUCLEOTIDE SEQUENCE [GENOMIC DNA]</scope>
</reference>
<reference key="3">
    <citation type="journal article" date="1998" name="Proteins">
        <title>Reactivation of the totally inactive pancreatic lipase RP1 by structure-predicted point mutations.</title>
        <authorList>
            <person name="Roussel A."/>
            <person name="de Caro J."/>
            <person name="Bezzine S."/>
            <person name="Gastinel L."/>
            <person name="de Caro A."/>
            <person name="Carriere F."/>
            <person name="Leydier S."/>
            <person name="Verger R."/>
            <person name="Cambillau C."/>
        </authorList>
    </citation>
    <scope>X-RAY CRYSTALLOGRAPHY (2.1 ANGSTROMS) IN COMPLEX WITH CALCIUM IONS</scope>
    <scope>GLYCOSYLATION AT ASN-157</scope>
    <scope>PROTEIN SEQUENCE OF 18-33</scope>
    <scope>ABSENCE OF LIPASE ACTIVITY</scope>
    <scope>DISULFIDE BONDS</scope>
    <scope>SUBCELLULAR LOCATION</scope>
    <scope>IDENTIFICATION BY MASS SPECTROMETRY</scope>
    <scope>MUTAGENESIS OF VAL-196 AND ALA-198</scope>
    <scope>TISSUE SPECIFICITY</scope>
    <source>
        <tissue>Pancreas</tissue>
    </source>
</reference>
<accession>P06857</accession>
<accession>Q28287</accession>
<comment type="function">
    <text>May function as inhibitor of dietary triglyceride digestion. Lacks detectable lipase activity towards triglycerides, diglycerides, phosphatidylcholine, galactolipids or cholesterol esters (in vitro).</text>
</comment>
<comment type="subcellular location">
    <subcellularLocation>
        <location evidence="2">Secreted</location>
    </subcellularLocation>
</comment>
<comment type="tissue specificity">
    <text evidence="2">Detected in pancreas (at protein level).</text>
</comment>
<comment type="similarity">
    <text evidence="3">Belongs to the AB hydrolase superfamily. Lipase family.</text>
</comment>
<comment type="caution">
    <text evidence="4">Was originally (PubMed:3562437, PubMed:2502543) thought to be the pancreatic lipase, but has been shown to lack lipase activity.</text>
</comment>
<comment type="sequence caution" evidence="3">
    <conflict type="erroneous gene model prediction">
        <sequence resource="EMBL-CDS" id="AAA30840"/>
    </conflict>
</comment>
<evidence type="ECO:0000255" key="1">
    <source>
        <dbReference type="PROSITE-ProRule" id="PRU00152"/>
    </source>
</evidence>
<evidence type="ECO:0000269" key="2">
    <source>
    </source>
</evidence>
<evidence type="ECO:0000305" key="3"/>
<evidence type="ECO:0000305" key="4">
    <source>
    </source>
</evidence>
<evidence type="ECO:0007829" key="5">
    <source>
        <dbReference type="PDB" id="1RP1"/>
    </source>
</evidence>
<gene>
    <name type="primary">PNLIPRP1</name>
    <name type="synonym">PLRP1</name>
</gene>
<keyword id="KW-0002">3D-structure</keyword>
<keyword id="KW-0106">Calcium</keyword>
<keyword id="KW-0903">Direct protein sequencing</keyword>
<keyword id="KW-1015">Disulfide bond</keyword>
<keyword id="KW-0325">Glycoprotein</keyword>
<keyword id="KW-0442">Lipid degradation</keyword>
<keyword id="KW-0443">Lipid metabolism</keyword>
<keyword id="KW-0479">Metal-binding</keyword>
<keyword id="KW-1185">Reference proteome</keyword>
<keyword id="KW-0964">Secreted</keyword>
<keyword id="KW-0732">Signal</keyword>
<name>LIPR1_CANLF</name>
<feature type="signal peptide" evidence="2">
    <location>
        <begin position="1"/>
        <end position="17"/>
    </location>
</feature>
<feature type="chain" id="PRO_0000017789" description="Inactive pancreatic lipase-related protein 1">
    <location>
        <begin position="18"/>
        <end position="467"/>
    </location>
</feature>
<feature type="domain" description="PLAT" evidence="1">
    <location>
        <begin position="356"/>
        <end position="467"/>
    </location>
</feature>
<feature type="active site" description="Nucleophile">
    <location>
        <position position="171"/>
    </location>
</feature>
<feature type="active site" description="Charge relay system">
    <location>
        <position position="194"/>
    </location>
</feature>
<feature type="active site" description="Charge relay system">
    <location>
        <position position="281"/>
    </location>
</feature>
<feature type="binding site">
    <location>
        <position position="205"/>
    </location>
    <ligand>
        <name>Ca(2+)</name>
        <dbReference type="ChEBI" id="CHEBI:29108"/>
    </ligand>
</feature>
<feature type="binding site">
    <location>
        <position position="208"/>
    </location>
    <ligand>
        <name>Ca(2+)</name>
        <dbReference type="ChEBI" id="CHEBI:29108"/>
    </ligand>
</feature>
<feature type="binding site">
    <location>
        <position position="210"/>
    </location>
    <ligand>
        <name>Ca(2+)</name>
        <dbReference type="ChEBI" id="CHEBI:29108"/>
    </ligand>
</feature>
<feature type="binding site">
    <location>
        <position position="213"/>
    </location>
    <ligand>
        <name>Ca(2+)</name>
        <dbReference type="ChEBI" id="CHEBI:29108"/>
    </ligand>
</feature>
<feature type="glycosylation site" description="N-linked (GlcNAc...) asparagine" evidence="2">
    <location>
        <position position="157"/>
    </location>
</feature>
<feature type="disulfide bond" evidence="1 2">
    <location>
        <begin position="21"/>
        <end position="27"/>
    </location>
</feature>
<feature type="disulfide bond" evidence="1 2">
    <location>
        <begin position="109"/>
        <end position="120"/>
    </location>
</feature>
<feature type="disulfide bond" evidence="1 2">
    <location>
        <begin position="255"/>
        <end position="279"/>
    </location>
</feature>
<feature type="disulfide bond" evidence="1 2">
    <location>
        <begin position="303"/>
        <end position="314"/>
    </location>
</feature>
<feature type="disulfide bond" evidence="1 2">
    <location>
        <begin position="317"/>
        <end position="322"/>
    </location>
</feature>
<feature type="disulfide bond" evidence="1 2">
    <location>
        <begin position="451"/>
        <end position="467"/>
    </location>
</feature>
<feature type="mutagenesis site" description="Removes steric hindrance and restores lipase activity; when associated with P-198." evidence="2">
    <original>V</original>
    <variation>A</variation>
    <location>
        <position position="196"/>
    </location>
</feature>
<feature type="mutagenesis site" description="Removes steric hindrance and restores lipase activity; when associated with A-196." evidence="2">
    <original>A</original>
    <variation>P</variation>
    <location>
        <position position="198"/>
    </location>
</feature>
<feature type="sequence conflict" description="In Ref. 1; AAA30885." evidence="3" ref="1">
    <original>I</original>
    <variation>T</variation>
    <location>
        <position position="92"/>
    </location>
</feature>
<feature type="sequence conflict" description="In Ref. 1; AAA30885." evidence="3" ref="1">
    <original>D</original>
    <variation>N</variation>
    <location>
        <position position="98"/>
    </location>
</feature>
<feature type="sequence conflict" description="In Ref. 1; AAA30885." evidence="3" ref="1">
    <original>D</original>
    <variation>N</variation>
    <location>
        <position position="265"/>
    </location>
</feature>
<feature type="strand" evidence="5">
    <location>
        <begin position="19"/>
        <end position="22"/>
    </location>
</feature>
<feature type="turn" evidence="5">
    <location>
        <begin position="23"/>
        <end position="25"/>
    </location>
</feature>
<feature type="strand" evidence="5">
    <location>
        <begin position="26"/>
        <end position="29"/>
    </location>
</feature>
<feature type="turn" evidence="5">
    <location>
        <begin position="32"/>
        <end position="34"/>
    </location>
</feature>
<feature type="strand" evidence="5">
    <location>
        <begin position="35"/>
        <end position="40"/>
    </location>
</feature>
<feature type="helix" evidence="5">
    <location>
        <begin position="49"/>
        <end position="52"/>
    </location>
</feature>
<feature type="strand" evidence="5">
    <location>
        <begin position="55"/>
        <end position="59"/>
    </location>
</feature>
<feature type="strand" evidence="5">
    <location>
        <begin position="61"/>
        <end position="66"/>
    </location>
</feature>
<feature type="strand" evidence="5">
    <location>
        <begin position="68"/>
        <end position="70"/>
    </location>
</feature>
<feature type="helix" evidence="5">
    <location>
        <begin position="76"/>
        <end position="79"/>
    </location>
</feature>
<feature type="strand" evidence="5">
    <location>
        <begin position="87"/>
        <end position="93"/>
    </location>
</feature>
<feature type="helix" evidence="5">
    <location>
        <begin position="104"/>
        <end position="112"/>
    </location>
</feature>
<feature type="turn" evidence="5">
    <location>
        <begin position="113"/>
        <end position="115"/>
    </location>
</feature>
<feature type="strand" evidence="5">
    <location>
        <begin position="118"/>
        <end position="124"/>
    </location>
</feature>
<feature type="helix" evidence="5">
    <location>
        <begin position="126"/>
        <end position="129"/>
    </location>
</feature>
<feature type="helix" evidence="5">
    <location>
        <begin position="133"/>
        <end position="158"/>
    </location>
</feature>
<feature type="helix" evidence="5">
    <location>
        <begin position="162"/>
        <end position="164"/>
    </location>
</feature>
<feature type="strand" evidence="5">
    <location>
        <begin position="165"/>
        <end position="170"/>
    </location>
</feature>
<feature type="helix" evidence="5">
    <location>
        <begin position="173"/>
        <end position="182"/>
    </location>
</feature>
<feature type="strand" evidence="5">
    <location>
        <begin position="189"/>
        <end position="194"/>
    </location>
</feature>
<feature type="turn" evidence="5">
    <location>
        <begin position="198"/>
        <end position="202"/>
    </location>
</feature>
<feature type="turn" evidence="5">
    <location>
        <begin position="205"/>
        <end position="207"/>
    </location>
</feature>
<feature type="helix" evidence="5">
    <location>
        <begin position="211"/>
        <end position="213"/>
    </location>
</feature>
<feature type="strand" evidence="5">
    <location>
        <begin position="214"/>
        <end position="220"/>
    </location>
</feature>
<feature type="helix" evidence="5">
    <location>
        <begin position="227"/>
        <end position="230"/>
    </location>
</feature>
<feature type="strand" evidence="5">
    <location>
        <begin position="240"/>
        <end position="246"/>
    </location>
</feature>
<feature type="turn" evidence="5">
    <location>
        <begin position="247"/>
        <end position="250"/>
    </location>
</feature>
<feature type="helix" evidence="5">
    <location>
        <begin position="266"/>
        <end position="270"/>
    </location>
</feature>
<feature type="helix" evidence="5">
    <location>
        <begin position="279"/>
        <end position="293"/>
    </location>
</feature>
<feature type="turn" evidence="5">
    <location>
        <begin position="295"/>
        <end position="298"/>
    </location>
</feature>
<feature type="helix" evidence="5">
    <location>
        <begin position="306"/>
        <end position="310"/>
    </location>
</feature>
<feature type="strand" evidence="5">
    <location>
        <begin position="324"/>
        <end position="326"/>
    </location>
</feature>
<feature type="helix" evidence="5">
    <location>
        <begin position="327"/>
        <end position="331"/>
    </location>
</feature>
<feature type="strand" evidence="5">
    <location>
        <begin position="342"/>
        <end position="345"/>
    </location>
</feature>
<feature type="strand" evidence="5">
    <location>
        <begin position="349"/>
        <end position="351"/>
    </location>
</feature>
<feature type="strand" evidence="5">
    <location>
        <begin position="356"/>
        <end position="367"/>
    </location>
</feature>
<feature type="strand" evidence="5">
    <location>
        <begin position="369"/>
        <end position="379"/>
    </location>
</feature>
<feature type="strand" evidence="5">
    <location>
        <begin position="387"/>
        <end position="394"/>
    </location>
</feature>
<feature type="strand" evidence="5">
    <location>
        <begin position="399"/>
        <end position="408"/>
    </location>
</feature>
<feature type="strand" evidence="5">
    <location>
        <begin position="411"/>
        <end position="422"/>
    </location>
</feature>
<feature type="strand" evidence="5">
    <location>
        <begin position="432"/>
        <end position="441"/>
    </location>
</feature>
<feature type="strand" evidence="5">
    <location>
        <begin position="448"/>
        <end position="451"/>
    </location>
</feature>
<feature type="strand" evidence="5">
    <location>
        <begin position="462"/>
        <end position="466"/>
    </location>
</feature>
<protein>
    <recommendedName>
        <fullName>Inactive pancreatic lipase-related protein 1</fullName>
        <shortName>PL-RP1</shortName>
    </recommendedName>
</protein>
<organism>
    <name type="scientific">Canis lupus familiaris</name>
    <name type="common">Dog</name>
    <name type="synonym">Canis familiaris</name>
    <dbReference type="NCBI Taxonomy" id="9615"/>
    <lineage>
        <taxon>Eukaryota</taxon>
        <taxon>Metazoa</taxon>
        <taxon>Chordata</taxon>
        <taxon>Craniata</taxon>
        <taxon>Vertebrata</taxon>
        <taxon>Euteleostomi</taxon>
        <taxon>Mammalia</taxon>
        <taxon>Eutheria</taxon>
        <taxon>Laurasiatheria</taxon>
        <taxon>Carnivora</taxon>
        <taxon>Caniformia</taxon>
        <taxon>Canidae</taxon>
        <taxon>Canis</taxon>
    </lineage>
</organism>
<dbReference type="EMBL" id="M35302">
    <property type="protein sequence ID" value="AAA30885.1"/>
    <property type="molecule type" value="mRNA"/>
</dbReference>
<dbReference type="EMBL" id="M28151">
    <property type="protein sequence ID" value="AAA30840.1"/>
    <property type="status" value="ALT_SEQ"/>
    <property type="molecule type" value="Genomic_DNA"/>
</dbReference>
<dbReference type="EMBL" id="M28141">
    <property type="protein sequence ID" value="AAA30840.1"/>
    <property type="status" value="JOINED"/>
    <property type="molecule type" value="Genomic_DNA"/>
</dbReference>
<dbReference type="EMBL" id="M28142">
    <property type="protein sequence ID" value="AAA30840.1"/>
    <property type="status" value="JOINED"/>
    <property type="molecule type" value="Genomic_DNA"/>
</dbReference>
<dbReference type="EMBL" id="M28143">
    <property type="protein sequence ID" value="AAA30840.1"/>
    <property type="status" value="JOINED"/>
    <property type="molecule type" value="Genomic_DNA"/>
</dbReference>
<dbReference type="EMBL" id="M28145">
    <property type="protein sequence ID" value="AAA30840.1"/>
    <property type="status" value="JOINED"/>
    <property type="molecule type" value="Genomic_DNA"/>
</dbReference>
<dbReference type="EMBL" id="M28148">
    <property type="protein sequence ID" value="AAA30840.1"/>
    <property type="status" value="JOINED"/>
    <property type="molecule type" value="Genomic_DNA"/>
</dbReference>
<dbReference type="EMBL" id="M28147">
    <property type="protein sequence ID" value="AAA30840.1"/>
    <property type="status" value="JOINED"/>
    <property type="molecule type" value="Genomic_DNA"/>
</dbReference>
<dbReference type="EMBL" id="M28146">
    <property type="protein sequence ID" value="AAA30840.1"/>
    <property type="status" value="JOINED"/>
    <property type="molecule type" value="Genomic_DNA"/>
</dbReference>
<dbReference type="EMBL" id="M28144">
    <property type="protein sequence ID" value="AAA30840.1"/>
    <property type="status" value="JOINED"/>
    <property type="molecule type" value="Genomic_DNA"/>
</dbReference>
<dbReference type="EMBL" id="M28149">
    <property type="protein sequence ID" value="AAA30840.1"/>
    <property type="status" value="JOINED"/>
    <property type="molecule type" value="Genomic_DNA"/>
</dbReference>
<dbReference type="EMBL" id="M28150">
    <property type="protein sequence ID" value="AAA30840.1"/>
    <property type="status" value="JOINED"/>
    <property type="molecule type" value="Genomic_DNA"/>
</dbReference>
<dbReference type="PIR" id="B24392">
    <property type="entry name" value="LIDG"/>
</dbReference>
<dbReference type="RefSeq" id="NP_001003319.2">
    <property type="nucleotide sequence ID" value="NM_001003319.2"/>
</dbReference>
<dbReference type="PDB" id="1RP1">
    <property type="method" value="X-ray"/>
    <property type="resolution" value="2.10 A"/>
    <property type="chains" value="A=18-467"/>
</dbReference>
<dbReference type="PDBsum" id="1RP1"/>
<dbReference type="SMR" id="P06857"/>
<dbReference type="FunCoup" id="P06857">
    <property type="interactions" value="26"/>
</dbReference>
<dbReference type="ESTHER" id="canfa-1plip">
    <property type="family name" value="Pancreatic_lipase"/>
</dbReference>
<dbReference type="GlyCosmos" id="P06857">
    <property type="glycosylation" value="1 site, No reported glycans"/>
</dbReference>
<dbReference type="iPTMnet" id="P06857"/>
<dbReference type="PaxDb" id="9612-ENSCAFP00000017453"/>
<dbReference type="Ensembl" id="ENSCAFT00000018834.4">
    <property type="protein sequence ID" value="ENSCAFP00000017453.4"/>
    <property type="gene ID" value="ENSCAFG00000011815.5"/>
</dbReference>
<dbReference type="Ensembl" id="ENSCAFT00030046588.1">
    <property type="protein sequence ID" value="ENSCAFP00030040719.1"/>
    <property type="gene ID" value="ENSCAFG00030025195.1"/>
</dbReference>
<dbReference type="Ensembl" id="ENSCAFT00040046440.1">
    <property type="protein sequence ID" value="ENSCAFP00040040526.1"/>
    <property type="gene ID" value="ENSCAFG00040024900.1"/>
</dbReference>
<dbReference type="Ensembl" id="ENSCAFT00845055120.1">
    <property type="protein sequence ID" value="ENSCAFP00845043344.1"/>
    <property type="gene ID" value="ENSCAFG00845030995.1"/>
</dbReference>
<dbReference type="GeneID" id="404010"/>
<dbReference type="KEGG" id="cfa:404010"/>
<dbReference type="CTD" id="5407"/>
<dbReference type="VEuPathDB" id="HostDB:ENSCAFG00845030995"/>
<dbReference type="VGNC" id="VGNC:44745">
    <property type="gene designation" value="PNLIP"/>
</dbReference>
<dbReference type="eggNOG" id="ENOG502QUK7">
    <property type="taxonomic scope" value="Eukaryota"/>
</dbReference>
<dbReference type="GeneTree" id="ENSGT00940000162375"/>
<dbReference type="HOGENOM" id="CLU_027171_0_2_1"/>
<dbReference type="InParanoid" id="P06857"/>
<dbReference type="OMA" id="WNIDSIR"/>
<dbReference type="OrthoDB" id="199913at2759"/>
<dbReference type="TreeFam" id="TF324997"/>
<dbReference type="BRENDA" id="3.1.1.26">
    <property type="organism ID" value="1153"/>
</dbReference>
<dbReference type="EvolutionaryTrace" id="P06857"/>
<dbReference type="Proteomes" id="UP000002254">
    <property type="component" value="Chromosome 28"/>
</dbReference>
<dbReference type="Proteomes" id="UP000694429">
    <property type="component" value="Chromosome 28"/>
</dbReference>
<dbReference type="Proteomes" id="UP000694542">
    <property type="component" value="Chromosome 28"/>
</dbReference>
<dbReference type="Proteomes" id="UP000805418">
    <property type="component" value="Chromosome 28"/>
</dbReference>
<dbReference type="GO" id="GO:0005576">
    <property type="term" value="C:extracellular region"/>
    <property type="evidence" value="ECO:0007669"/>
    <property type="project" value="UniProtKB-SubCell"/>
</dbReference>
<dbReference type="GO" id="GO:0005509">
    <property type="term" value="F:calcium ion binding"/>
    <property type="evidence" value="ECO:0000314"/>
    <property type="project" value="UniProtKB"/>
</dbReference>
<dbReference type="GO" id="GO:0052689">
    <property type="term" value="F:carboxylic ester hydrolase activity"/>
    <property type="evidence" value="ECO:0007669"/>
    <property type="project" value="InterPro"/>
</dbReference>
<dbReference type="GO" id="GO:0016042">
    <property type="term" value="P:lipid catabolic process"/>
    <property type="evidence" value="ECO:0007669"/>
    <property type="project" value="UniProtKB-KW"/>
</dbReference>
<dbReference type="CDD" id="cd00707">
    <property type="entry name" value="Pancreat_lipase_like"/>
    <property type="match status" value="1"/>
</dbReference>
<dbReference type="CDD" id="cd01759">
    <property type="entry name" value="PLAT_PL"/>
    <property type="match status" value="1"/>
</dbReference>
<dbReference type="FunFam" id="3.40.50.1820:FF:000033">
    <property type="entry name" value="Pancreatic triacylglycerol lipase"/>
    <property type="match status" value="1"/>
</dbReference>
<dbReference type="FunFam" id="2.60.60.20:FF:000003">
    <property type="entry name" value="Triacylglycerol lipase"/>
    <property type="match status" value="1"/>
</dbReference>
<dbReference type="Gene3D" id="3.40.50.1820">
    <property type="entry name" value="alpha/beta hydrolase"/>
    <property type="match status" value="1"/>
</dbReference>
<dbReference type="Gene3D" id="2.60.60.20">
    <property type="entry name" value="PLAT/LH2 domain"/>
    <property type="match status" value="1"/>
</dbReference>
<dbReference type="InterPro" id="IPR029058">
    <property type="entry name" value="AB_hydrolase_fold"/>
</dbReference>
<dbReference type="InterPro" id="IPR013818">
    <property type="entry name" value="Lipase"/>
</dbReference>
<dbReference type="InterPro" id="IPR016272">
    <property type="entry name" value="Lipase_LIPH"/>
</dbReference>
<dbReference type="InterPro" id="IPR033906">
    <property type="entry name" value="Lipase_N"/>
</dbReference>
<dbReference type="InterPro" id="IPR002331">
    <property type="entry name" value="Lipase_panc"/>
</dbReference>
<dbReference type="InterPro" id="IPR001024">
    <property type="entry name" value="PLAT/LH2_dom"/>
</dbReference>
<dbReference type="InterPro" id="IPR036392">
    <property type="entry name" value="PLAT/LH2_dom_sf"/>
</dbReference>
<dbReference type="InterPro" id="IPR000734">
    <property type="entry name" value="TAG_lipase"/>
</dbReference>
<dbReference type="PANTHER" id="PTHR11610:SF108">
    <property type="entry name" value="INACTIVE PANCREATIC LIPASE-RELATED PROTEIN 1"/>
    <property type="match status" value="1"/>
</dbReference>
<dbReference type="PANTHER" id="PTHR11610">
    <property type="entry name" value="LIPASE"/>
    <property type="match status" value="1"/>
</dbReference>
<dbReference type="Pfam" id="PF00151">
    <property type="entry name" value="Lipase"/>
    <property type="match status" value="1"/>
</dbReference>
<dbReference type="Pfam" id="PF01477">
    <property type="entry name" value="PLAT"/>
    <property type="match status" value="1"/>
</dbReference>
<dbReference type="PIRSF" id="PIRSF000865">
    <property type="entry name" value="Lipoprotein_lipase_LIPH"/>
    <property type="match status" value="1"/>
</dbReference>
<dbReference type="PRINTS" id="PR00823">
    <property type="entry name" value="PANCLIPASE"/>
</dbReference>
<dbReference type="PRINTS" id="PR00821">
    <property type="entry name" value="TAGLIPASE"/>
</dbReference>
<dbReference type="SMART" id="SM00308">
    <property type="entry name" value="LH2"/>
    <property type="match status" value="1"/>
</dbReference>
<dbReference type="SUPFAM" id="SSF53474">
    <property type="entry name" value="alpha/beta-Hydrolases"/>
    <property type="match status" value="1"/>
</dbReference>
<dbReference type="SUPFAM" id="SSF49723">
    <property type="entry name" value="Lipase/lipooxygenase domain (PLAT/LH2 domain)"/>
    <property type="match status" value="1"/>
</dbReference>
<dbReference type="PROSITE" id="PS00120">
    <property type="entry name" value="LIPASE_SER"/>
    <property type="match status" value="1"/>
</dbReference>
<dbReference type="PROSITE" id="PS50095">
    <property type="entry name" value="PLAT"/>
    <property type="match status" value="1"/>
</dbReference>
<proteinExistence type="evidence at protein level"/>
<sequence>MVSIWTIALFLLGAAKAKEVCYEQIGCFSDAEPWAGTAIRPLKVLPWSPERIGTRFLLYTNKNPNNFQTLLPSDPSTIEASNFQTDKKTRFIIHGFIDKGEENWLLDMCKNMFKVEEVNCICVDWKKGSQTSYTQAANNVRVVGAQVAQMLSMLSANYSYSPSQVQLIGHSLGAHVAGEAGSRTPGLGRITGLDPVEASFQGTPEEVRLDPTDADFVDVIHTDAAPLIPFLGFGTSQQMGHLDFFPNGGEEMPGCKKNALSQIVDLDGIWEGTRDFVACNHLRSYKYYSESILNPDGFASYPCASYRAFESNKCFPCPDQGCPQMGHYADKFAVKTSDETQKYFLNTGDSSNFARWRYGVSITLSGKRATGQAKVALFGSKGNTHQFNIFKGILKPGSTHSNEFDAKLDVGTIEKVKFLWNNNVVNPTFPKVGAAKITVQKGEEKTVHSFCSESTVREDVLLTLTPC</sequence>